<organism>
    <name type="scientific">Aeropyrum pernix (strain ATCC 700893 / DSM 11879 / JCM 9820 / NBRC 100138 / K1)</name>
    <dbReference type="NCBI Taxonomy" id="272557"/>
    <lineage>
        <taxon>Archaea</taxon>
        <taxon>Thermoproteota</taxon>
        <taxon>Thermoprotei</taxon>
        <taxon>Desulfurococcales</taxon>
        <taxon>Desulfurococcaceae</taxon>
        <taxon>Aeropyrum</taxon>
    </lineage>
</organism>
<keyword id="KW-1185">Reference proteome</keyword>
<keyword id="KW-0687">Ribonucleoprotein</keyword>
<keyword id="KW-0689">Ribosomal protein</keyword>
<keyword id="KW-0694">RNA-binding</keyword>
<keyword id="KW-0699">rRNA-binding</keyword>
<reference key="1">
    <citation type="journal article" date="1999" name="DNA Res.">
        <title>Complete genome sequence of an aerobic hyper-thermophilic crenarchaeon, Aeropyrum pernix K1.</title>
        <authorList>
            <person name="Kawarabayasi Y."/>
            <person name="Hino Y."/>
            <person name="Horikawa H."/>
            <person name="Yamazaki S."/>
            <person name="Haikawa Y."/>
            <person name="Jin-no K."/>
            <person name="Takahashi M."/>
            <person name="Sekine M."/>
            <person name="Baba S."/>
            <person name="Ankai A."/>
            <person name="Kosugi H."/>
            <person name="Hosoyama A."/>
            <person name="Fukui S."/>
            <person name="Nagai Y."/>
            <person name="Nishijima K."/>
            <person name="Nakazawa H."/>
            <person name="Takamiya M."/>
            <person name="Masuda S."/>
            <person name="Funahashi T."/>
            <person name="Tanaka T."/>
            <person name="Kudoh Y."/>
            <person name="Yamazaki J."/>
            <person name="Kushida N."/>
            <person name="Oguchi A."/>
            <person name="Aoki K."/>
            <person name="Kubota K."/>
            <person name="Nakamura Y."/>
            <person name="Nomura N."/>
            <person name="Sako Y."/>
            <person name="Kikuchi H."/>
        </authorList>
    </citation>
    <scope>NUCLEOTIDE SEQUENCE [LARGE SCALE GENOMIC DNA]</scope>
    <source>
        <strain>ATCC 700893 / DSM 11879 / JCM 9820 / NBRC 100138 / K1</strain>
    </source>
</reference>
<dbReference type="EMBL" id="BA000002">
    <property type="protein sequence ID" value="BAA79303.1"/>
    <property type="molecule type" value="Genomic_DNA"/>
</dbReference>
<dbReference type="PIR" id="C72726">
    <property type="entry name" value="C72726"/>
</dbReference>
<dbReference type="RefSeq" id="WP_010865682.1">
    <property type="nucleotide sequence ID" value="NC_000854.2"/>
</dbReference>
<dbReference type="SMR" id="Q9YF93"/>
<dbReference type="STRING" id="272557.APE_0348"/>
<dbReference type="EnsemblBacteria" id="BAA79303">
    <property type="protein sequence ID" value="BAA79303"/>
    <property type="gene ID" value="APE_0348"/>
</dbReference>
<dbReference type="GeneID" id="1444566"/>
<dbReference type="KEGG" id="ape:APE_0348"/>
<dbReference type="PATRIC" id="fig|272557.25.peg.268"/>
<dbReference type="eggNOG" id="arCOG04089">
    <property type="taxonomic scope" value="Archaea"/>
</dbReference>
<dbReference type="Proteomes" id="UP000002518">
    <property type="component" value="Chromosome"/>
</dbReference>
<dbReference type="GO" id="GO:0022625">
    <property type="term" value="C:cytosolic large ribosomal subunit"/>
    <property type="evidence" value="ECO:0007669"/>
    <property type="project" value="InterPro"/>
</dbReference>
<dbReference type="GO" id="GO:0070180">
    <property type="term" value="F:large ribosomal subunit rRNA binding"/>
    <property type="evidence" value="ECO:0007669"/>
    <property type="project" value="UniProtKB-UniRule"/>
</dbReference>
<dbReference type="GO" id="GO:0003735">
    <property type="term" value="F:structural constituent of ribosome"/>
    <property type="evidence" value="ECO:0007669"/>
    <property type="project" value="InterPro"/>
</dbReference>
<dbReference type="GO" id="GO:0006412">
    <property type="term" value="P:translation"/>
    <property type="evidence" value="ECO:0007669"/>
    <property type="project" value="UniProtKB-UniRule"/>
</dbReference>
<dbReference type="CDD" id="cd01418">
    <property type="entry name" value="Ribosomal_L19e_A"/>
    <property type="match status" value="1"/>
</dbReference>
<dbReference type="Gene3D" id="1.10.1200.240">
    <property type="match status" value="1"/>
</dbReference>
<dbReference type="Gene3D" id="1.10.1650.10">
    <property type="match status" value="1"/>
</dbReference>
<dbReference type="HAMAP" id="MF_01475">
    <property type="entry name" value="Ribosomal_eL19"/>
    <property type="match status" value="1"/>
</dbReference>
<dbReference type="InterPro" id="IPR035970">
    <property type="entry name" value="60S_ribosomal_eL19_sf"/>
</dbReference>
<dbReference type="InterPro" id="IPR039547">
    <property type="entry name" value="Ribosomal_eL19"/>
</dbReference>
<dbReference type="InterPro" id="IPR033936">
    <property type="entry name" value="Ribosomal_eL19_arc"/>
</dbReference>
<dbReference type="InterPro" id="IPR023638">
    <property type="entry name" value="Ribosomal_eL19_CS"/>
</dbReference>
<dbReference type="InterPro" id="IPR000196">
    <property type="entry name" value="Ribosomal_eL19_dom"/>
</dbReference>
<dbReference type="InterPro" id="IPR015972">
    <property type="entry name" value="Ribosomal_eL19_dom1"/>
</dbReference>
<dbReference type="NCBIfam" id="NF006343">
    <property type="entry name" value="PRK08570.1"/>
    <property type="match status" value="1"/>
</dbReference>
<dbReference type="PANTHER" id="PTHR10722">
    <property type="entry name" value="60S RIBOSOMAL PROTEIN L19"/>
    <property type="match status" value="1"/>
</dbReference>
<dbReference type="Pfam" id="PF01280">
    <property type="entry name" value="Ribosomal_L19e"/>
    <property type="match status" value="1"/>
</dbReference>
<dbReference type="Pfam" id="PF25476">
    <property type="entry name" value="Ribosomal_L19e_C"/>
    <property type="match status" value="1"/>
</dbReference>
<dbReference type="SMART" id="SM01416">
    <property type="entry name" value="Ribosomal_L19e"/>
    <property type="match status" value="1"/>
</dbReference>
<dbReference type="SUPFAM" id="SSF48140">
    <property type="entry name" value="Ribosomal protein L19 (L19e)"/>
    <property type="match status" value="1"/>
</dbReference>
<dbReference type="PROSITE" id="PS00526">
    <property type="entry name" value="RIBOSOMAL_L19E"/>
    <property type="match status" value="1"/>
</dbReference>
<gene>
    <name evidence="1" type="primary">rpl19e</name>
    <name type="ordered locus">APE_0348</name>
</gene>
<name>RL19E_AERPE</name>
<proteinExistence type="inferred from homology"/>
<comment type="function">
    <text evidence="1">Binds to the 23S rRNA.</text>
</comment>
<comment type="subunit">
    <text evidence="1">Part of the 50S ribosomal subunit.</text>
</comment>
<comment type="similarity">
    <text evidence="1">Belongs to the eukaryotic ribosomal protein eL19 family.</text>
</comment>
<feature type="chain" id="PRO_0000131185" description="Large ribosomal subunit protein eL19">
    <location>
        <begin position="1"/>
        <end position="155"/>
    </location>
</feature>
<feature type="region of interest" description="Disordered" evidence="2">
    <location>
        <begin position="66"/>
        <end position="85"/>
    </location>
</feature>
<feature type="compositionally biased region" description="Basic residues" evidence="2">
    <location>
        <begin position="66"/>
        <end position="84"/>
    </location>
</feature>
<evidence type="ECO:0000255" key="1">
    <source>
        <dbReference type="HAMAP-Rule" id="MF_01475"/>
    </source>
</evidence>
<evidence type="ECO:0000256" key="2">
    <source>
        <dbReference type="SAM" id="MobiDB-lite"/>
    </source>
</evidence>
<evidence type="ECO:0000305" key="3"/>
<sequence>MDYRFQRRLAAEILGVGESRIWISPDPELREEIEGAVTKADVRALIKRGVIKVLPEKGNAGHASKVRHLQRRKGRRRGMGRRKGVATARLDPKERWMHRIRKIRRYLRYLRDKQVIDRKTYRRLYMLAKGGTFRDLASLKRYMADRGLVPEEKIR</sequence>
<accession>Q9YF93</accession>
<protein>
    <recommendedName>
        <fullName evidence="1">Large ribosomal subunit protein eL19</fullName>
    </recommendedName>
    <alternativeName>
        <fullName evidence="3">50S ribosomal protein L19e</fullName>
    </alternativeName>
</protein>